<proteinExistence type="predicted"/>
<organism>
    <name type="scientific">Escherichia coli (strain K12)</name>
    <dbReference type="NCBI Taxonomy" id="83333"/>
    <lineage>
        <taxon>Bacteria</taxon>
        <taxon>Pseudomonadati</taxon>
        <taxon>Pseudomonadota</taxon>
        <taxon>Gammaproteobacteria</taxon>
        <taxon>Enterobacterales</taxon>
        <taxon>Enterobacteriaceae</taxon>
        <taxon>Escherichia</taxon>
    </lineage>
</organism>
<evidence type="ECO:0000255" key="1"/>
<evidence type="ECO:0000255" key="2">
    <source>
        <dbReference type="PROSITE-ProRule" id="PRU00995"/>
    </source>
</evidence>
<keyword id="KW-0067">ATP-binding</keyword>
<keyword id="KW-0547">Nucleotide-binding</keyword>
<keyword id="KW-1185">Reference proteome</keyword>
<sequence length="552" mass="63589">MILERVEIVGFRGINRLSLMLEQNNVLIGENAWGKSSLLDALTLLLSPESDLYHFERDDFWFPPGDINGREHHLHIILTFRESLPGRHRVRRYRPLEACWTPCTDGYHRIFYRLEGESAEDGSVMTLRSFLDKDGHPIDVEDINDQARHLVRLMPVLRLRDARFMRRIRNGTVPNVPNVEVTARQLDFLARELSSHPQNLSDGQIRQGLSAMVQLLEHYFSEQGAGQARYRLMRRRASNEQRSWRYLDIINRMIDRPGGRSYRVILLGLFATLLQAKGTLRLDKDARPLLLIEDPETRLHPIMLSVAWHLLNLLPLQRIATTNSGELLSLTPVEHVCRLVRESSRVAAWRLGPSGLSTEDSRRISFHIRFNRPSSLFARCWLLVEGETETWVINELARQCGHHFDAEGIKVIEFAQSGLKPLVKFARRMGIEWHVLVDGDEAGKKYAATVRSLLNNDREAEREHLTALPALDMEHFMYRQGFSDVFHRMAQIPENVPMNLRKIISKAIHRSSKPDLAIEVAMEAGRRGVDSVPTLLKKMFSRVLWLARGRAD</sequence>
<dbReference type="EMBL" id="U00096">
    <property type="protein sequence ID" value="AAC73963.1"/>
    <property type="molecule type" value="Genomic_DNA"/>
</dbReference>
<dbReference type="EMBL" id="AP009048">
    <property type="protein sequence ID" value="BAA35594.1"/>
    <property type="molecule type" value="Genomic_DNA"/>
</dbReference>
<dbReference type="PIR" id="D64826">
    <property type="entry name" value="D64826"/>
</dbReference>
<dbReference type="RefSeq" id="NP_415397.1">
    <property type="nucleotide sequence ID" value="NC_000913.3"/>
</dbReference>
<dbReference type="RefSeq" id="WP_000599802.1">
    <property type="nucleotide sequence ID" value="NZ_LN832404.1"/>
</dbReference>
<dbReference type="SMR" id="P75828"/>
<dbReference type="BioGRID" id="4260001">
    <property type="interactions" value="62"/>
</dbReference>
<dbReference type="DIP" id="DIP-11446N"/>
<dbReference type="FunCoup" id="P75828">
    <property type="interactions" value="80"/>
</dbReference>
<dbReference type="IntAct" id="P75828">
    <property type="interactions" value="6"/>
</dbReference>
<dbReference type="STRING" id="511145.b0876"/>
<dbReference type="jPOST" id="P75828"/>
<dbReference type="PaxDb" id="511145-b0876"/>
<dbReference type="EnsemblBacteria" id="AAC73963">
    <property type="protein sequence ID" value="AAC73963"/>
    <property type="gene ID" value="b0876"/>
</dbReference>
<dbReference type="GeneID" id="945498"/>
<dbReference type="KEGG" id="ecj:JW0860"/>
<dbReference type="KEGG" id="eco:b0876"/>
<dbReference type="KEGG" id="ecoc:C3026_05445"/>
<dbReference type="PATRIC" id="fig|511145.12.peg.905"/>
<dbReference type="EchoBASE" id="EB3199"/>
<dbReference type="eggNOG" id="COG3593">
    <property type="taxonomic scope" value="Bacteria"/>
</dbReference>
<dbReference type="HOGENOM" id="CLU_034845_0_0_6"/>
<dbReference type="InParanoid" id="P75828"/>
<dbReference type="OMA" id="MNMRRVI"/>
<dbReference type="OrthoDB" id="5836727at2"/>
<dbReference type="PhylomeDB" id="P75828"/>
<dbReference type="BioCyc" id="EcoCyc:G6459-MONOMER"/>
<dbReference type="PRO" id="PR:P75828"/>
<dbReference type="Proteomes" id="UP000000625">
    <property type="component" value="Chromosome"/>
</dbReference>
<dbReference type="GO" id="GO:0005524">
    <property type="term" value="F:ATP binding"/>
    <property type="evidence" value="ECO:0007669"/>
    <property type="project" value="UniProtKB-KW"/>
</dbReference>
<dbReference type="GO" id="GO:0000731">
    <property type="term" value="P:DNA synthesis involved in DNA repair"/>
    <property type="evidence" value="ECO:0000318"/>
    <property type="project" value="GO_Central"/>
</dbReference>
<dbReference type="GO" id="GO:0006302">
    <property type="term" value="P:double-strand break repair"/>
    <property type="evidence" value="ECO:0000318"/>
    <property type="project" value="GO_Central"/>
</dbReference>
<dbReference type="CDD" id="cd01026">
    <property type="entry name" value="TOPRIM_OLD"/>
    <property type="match status" value="1"/>
</dbReference>
<dbReference type="FunFam" id="3.40.50.300:FF:001342">
    <property type="entry name" value="ATP-dependent OLD family endonuclease"/>
    <property type="match status" value="1"/>
</dbReference>
<dbReference type="Gene3D" id="3.40.50.300">
    <property type="entry name" value="P-loop containing nucleotide triphosphate hydrolases"/>
    <property type="match status" value="1"/>
</dbReference>
<dbReference type="InterPro" id="IPR022602">
    <property type="entry name" value="DUF2813"/>
</dbReference>
<dbReference type="InterPro" id="IPR027417">
    <property type="entry name" value="P-loop_NTPase"/>
</dbReference>
<dbReference type="InterPro" id="IPR006171">
    <property type="entry name" value="TOPRIM_dom"/>
</dbReference>
<dbReference type="InterPro" id="IPR034139">
    <property type="entry name" value="TOPRIM_OLD"/>
</dbReference>
<dbReference type="PANTHER" id="PTHR32182">
    <property type="entry name" value="DNA REPLICATION AND REPAIR PROTEIN RECF"/>
    <property type="match status" value="1"/>
</dbReference>
<dbReference type="PANTHER" id="PTHR32182:SF19">
    <property type="entry name" value="HOMOLOGY WITH RECF PROTEIN"/>
    <property type="match status" value="1"/>
</dbReference>
<dbReference type="Pfam" id="PF11398">
    <property type="entry name" value="DUF2813"/>
    <property type="match status" value="1"/>
</dbReference>
<dbReference type="Pfam" id="PF20469">
    <property type="entry name" value="OLD-like_TOPRIM"/>
    <property type="match status" value="1"/>
</dbReference>
<dbReference type="SUPFAM" id="SSF52540">
    <property type="entry name" value="P-loop containing nucleoside triphosphate hydrolases"/>
    <property type="match status" value="1"/>
</dbReference>
<dbReference type="PROSITE" id="PS50880">
    <property type="entry name" value="TOPRIM"/>
    <property type="match status" value="1"/>
</dbReference>
<feature type="chain" id="PRO_0000168736" description="Uncharacterized protein YbjD">
    <location>
        <begin position="1"/>
        <end position="552"/>
    </location>
</feature>
<feature type="domain" description="Toprim" evidence="2">
    <location>
        <begin position="379"/>
        <end position="469"/>
    </location>
</feature>
<feature type="binding site" evidence="1">
    <location>
        <begin position="29"/>
        <end position="36"/>
    </location>
    <ligand>
        <name>ATP</name>
        <dbReference type="ChEBI" id="CHEBI:30616"/>
    </ligand>
</feature>
<gene>
    <name type="primary">ybjD</name>
    <name type="ordered locus">b0876</name>
    <name type="ordered locus">JW0860</name>
</gene>
<name>YBJD_ECOLI</name>
<reference key="1">
    <citation type="journal article" date="1996" name="DNA Res.">
        <title>A 718-kb DNA sequence of the Escherichia coli K-12 genome corresponding to the 12.7-28.0 min region on the linkage map.</title>
        <authorList>
            <person name="Oshima T."/>
            <person name="Aiba H."/>
            <person name="Baba T."/>
            <person name="Fujita K."/>
            <person name="Hayashi K."/>
            <person name="Honjo A."/>
            <person name="Ikemoto K."/>
            <person name="Inada T."/>
            <person name="Itoh T."/>
            <person name="Kajihara M."/>
            <person name="Kanai K."/>
            <person name="Kashimoto K."/>
            <person name="Kimura S."/>
            <person name="Kitagawa M."/>
            <person name="Makino K."/>
            <person name="Masuda S."/>
            <person name="Miki T."/>
            <person name="Mizobuchi K."/>
            <person name="Mori H."/>
            <person name="Motomura K."/>
            <person name="Nakamura Y."/>
            <person name="Nashimoto H."/>
            <person name="Nishio Y."/>
            <person name="Saito N."/>
            <person name="Sampei G."/>
            <person name="Seki Y."/>
            <person name="Tagami H."/>
            <person name="Takemoto K."/>
            <person name="Wada C."/>
            <person name="Yamamoto Y."/>
            <person name="Yano M."/>
            <person name="Horiuchi T."/>
        </authorList>
    </citation>
    <scope>NUCLEOTIDE SEQUENCE [LARGE SCALE GENOMIC DNA]</scope>
    <source>
        <strain>K12 / W3110 / ATCC 27325 / DSM 5911</strain>
    </source>
</reference>
<reference key="2">
    <citation type="journal article" date="1997" name="Science">
        <title>The complete genome sequence of Escherichia coli K-12.</title>
        <authorList>
            <person name="Blattner F.R."/>
            <person name="Plunkett G. III"/>
            <person name="Bloch C.A."/>
            <person name="Perna N.T."/>
            <person name="Burland V."/>
            <person name="Riley M."/>
            <person name="Collado-Vides J."/>
            <person name="Glasner J.D."/>
            <person name="Rode C.K."/>
            <person name="Mayhew G.F."/>
            <person name="Gregor J."/>
            <person name="Davis N.W."/>
            <person name="Kirkpatrick H.A."/>
            <person name="Goeden M.A."/>
            <person name="Rose D.J."/>
            <person name="Mau B."/>
            <person name="Shao Y."/>
        </authorList>
    </citation>
    <scope>NUCLEOTIDE SEQUENCE [LARGE SCALE GENOMIC DNA]</scope>
    <source>
        <strain>K12 / MG1655 / ATCC 47076</strain>
    </source>
</reference>
<reference key="3">
    <citation type="journal article" date="2006" name="Mol. Syst. Biol.">
        <title>Highly accurate genome sequences of Escherichia coli K-12 strains MG1655 and W3110.</title>
        <authorList>
            <person name="Hayashi K."/>
            <person name="Morooka N."/>
            <person name="Yamamoto Y."/>
            <person name="Fujita K."/>
            <person name="Isono K."/>
            <person name="Choi S."/>
            <person name="Ohtsubo E."/>
            <person name="Baba T."/>
            <person name="Wanner B.L."/>
            <person name="Mori H."/>
            <person name="Horiuchi T."/>
        </authorList>
    </citation>
    <scope>NUCLEOTIDE SEQUENCE [LARGE SCALE GENOMIC DNA]</scope>
    <source>
        <strain>K12 / W3110 / ATCC 27325 / DSM 5911</strain>
    </source>
</reference>
<protein>
    <recommendedName>
        <fullName>Uncharacterized protein YbjD</fullName>
    </recommendedName>
</protein>
<accession>P75828</accession>